<evidence type="ECO:0000250" key="1"/>
<evidence type="ECO:0000250" key="2">
    <source>
        <dbReference type="UniProtKB" id="P28691"/>
    </source>
</evidence>
<evidence type="ECO:0000255" key="3"/>
<evidence type="ECO:0000305" key="4"/>
<protein>
    <recommendedName>
        <fullName>ATP-dependent zinc metalloprotease FTSH, chloroplastic</fullName>
        <ecNumber>3.4.24.-</ecNumber>
    </recommendedName>
</protein>
<sequence>FLEYLDKDRVRVQLPGLSQELLQKTPGFSGADLANLLNEAAILAGRR</sequence>
<comment type="function">
    <text evidence="2">Seems to act as an ATP-dependent zinc metallopeptidase.</text>
</comment>
<comment type="cofactor">
    <cofactor evidence="4">
        <name>Zn(2+)</name>
        <dbReference type="ChEBI" id="CHEBI:29105"/>
    </cofactor>
    <text evidence="4">Binds 1 zinc ion per subunit.</text>
</comment>
<comment type="subcellular location">
    <subcellularLocation>
        <location evidence="1">Plastid</location>
        <location evidence="1">Chloroplast membrane</location>
        <topology evidence="1">Multi-pass membrane protein</topology>
    </subcellularLocation>
</comment>
<comment type="similarity">
    <text evidence="3">In the N-terminal section; belongs to the AAA ATPase family.</text>
</comment>
<comment type="similarity">
    <text evidence="3">In the C-terminal section; belongs to the peptidase M41 family.</text>
</comment>
<dbReference type="EC" id="3.4.24.-"/>
<dbReference type="SMR" id="P84578"/>
<dbReference type="Proteomes" id="UP000694918">
    <property type="component" value="Unplaced"/>
</dbReference>
<dbReference type="GO" id="GO:0031969">
    <property type="term" value="C:chloroplast membrane"/>
    <property type="evidence" value="ECO:0007669"/>
    <property type="project" value="UniProtKB-SubCell"/>
</dbReference>
<dbReference type="GO" id="GO:0005524">
    <property type="term" value="F:ATP binding"/>
    <property type="evidence" value="ECO:0007669"/>
    <property type="project" value="UniProtKB-KW"/>
</dbReference>
<dbReference type="GO" id="GO:0046872">
    <property type="term" value="F:metal ion binding"/>
    <property type="evidence" value="ECO:0007669"/>
    <property type="project" value="UniProtKB-KW"/>
</dbReference>
<dbReference type="GO" id="GO:0008237">
    <property type="term" value="F:metallopeptidase activity"/>
    <property type="evidence" value="ECO:0007669"/>
    <property type="project" value="UniProtKB-KW"/>
</dbReference>
<dbReference type="GO" id="GO:0051301">
    <property type="term" value="P:cell division"/>
    <property type="evidence" value="ECO:0007669"/>
    <property type="project" value="UniProtKB-KW"/>
</dbReference>
<dbReference type="GO" id="GO:0006508">
    <property type="term" value="P:proteolysis"/>
    <property type="evidence" value="ECO:0007669"/>
    <property type="project" value="UniProtKB-KW"/>
</dbReference>
<dbReference type="Gene3D" id="1.10.8.60">
    <property type="match status" value="1"/>
</dbReference>
<dbReference type="InterPro" id="IPR041569">
    <property type="entry name" value="AAA_lid_3"/>
</dbReference>
<dbReference type="Pfam" id="PF17862">
    <property type="entry name" value="AAA_lid_3"/>
    <property type="match status" value="1"/>
</dbReference>
<feature type="chain" id="PRO_0000084663" description="ATP-dependent zinc metalloprotease FTSH, chloroplastic">
    <location>
        <begin position="1" status="less than"/>
        <end position="47" status="greater than"/>
    </location>
</feature>
<feature type="non-consecutive residues" evidence="4">
    <location>
        <begin position="9"/>
        <end position="10"/>
    </location>
</feature>
<feature type="non-consecutive residues" evidence="4">
    <location>
        <begin position="24"/>
        <end position="25"/>
    </location>
</feature>
<feature type="non-terminal residue">
    <location>
        <position position="1"/>
    </location>
</feature>
<feature type="non-terminal residue">
    <location>
        <position position="47"/>
    </location>
</feature>
<reference key="1">
    <citation type="journal article" date="2006" name="Ann. Bot.">
        <title>Proteome profiling of Populus euphratica Oliv. upon heat stress.</title>
        <authorList>
            <person name="Ferreira S."/>
            <person name="Hjernoe K."/>
            <person name="Larsen M."/>
            <person name="Wingsle G."/>
            <person name="Larsen P."/>
            <person name="Fey S."/>
            <person name="Roepstorff P."/>
            <person name="Pais M.S."/>
        </authorList>
    </citation>
    <scope>PROTEIN SEQUENCE</scope>
    <source>
        <tissue>Leaf</tissue>
    </source>
</reference>
<keyword id="KW-0067">ATP-binding</keyword>
<keyword id="KW-0131">Cell cycle</keyword>
<keyword id="KW-0132">Cell division</keyword>
<keyword id="KW-0150">Chloroplast</keyword>
<keyword id="KW-0903">Direct protein sequencing</keyword>
<keyword id="KW-0378">Hydrolase</keyword>
<keyword id="KW-0472">Membrane</keyword>
<keyword id="KW-0479">Metal-binding</keyword>
<keyword id="KW-0482">Metalloprotease</keyword>
<keyword id="KW-0547">Nucleotide-binding</keyword>
<keyword id="KW-0934">Plastid</keyword>
<keyword id="KW-0645">Protease</keyword>
<keyword id="KW-1185">Reference proteome</keyword>
<keyword id="KW-0862">Zinc</keyword>
<name>FTSH_POPEU</name>
<organism>
    <name type="scientific">Populus euphratica</name>
    <name type="common">Euphrates poplar</name>
    <dbReference type="NCBI Taxonomy" id="75702"/>
    <lineage>
        <taxon>Eukaryota</taxon>
        <taxon>Viridiplantae</taxon>
        <taxon>Streptophyta</taxon>
        <taxon>Embryophyta</taxon>
        <taxon>Tracheophyta</taxon>
        <taxon>Spermatophyta</taxon>
        <taxon>Magnoliopsida</taxon>
        <taxon>eudicotyledons</taxon>
        <taxon>Gunneridae</taxon>
        <taxon>Pentapetalae</taxon>
        <taxon>rosids</taxon>
        <taxon>fabids</taxon>
        <taxon>Malpighiales</taxon>
        <taxon>Salicaceae</taxon>
        <taxon>Saliceae</taxon>
        <taxon>Populus</taxon>
    </lineage>
</organism>
<proteinExistence type="evidence at protein level"/>
<accession>P84578</accession>